<comment type="function">
    <text evidence="1">Enables the recognition and targeting of unfolded and aggregated proteins to the ClpC protease or to other proteins involved in proteolysis.</text>
</comment>
<comment type="subunit">
    <text evidence="1">Homodimer.</text>
</comment>
<comment type="domain">
    <text>The N-terminal domain probably binds unfolded/aggregated proteins; the C-terminal domain interacts with ClpC.</text>
</comment>
<comment type="similarity">
    <text evidence="1">Belongs to the MecA family.</text>
</comment>
<gene>
    <name evidence="1" type="primary">mecA</name>
    <name type="ordered locus">SAOUHSC_00935</name>
</gene>
<dbReference type="EMBL" id="CP000253">
    <property type="protein sequence ID" value="ABD30060.1"/>
    <property type="molecule type" value="Genomic_DNA"/>
</dbReference>
<dbReference type="RefSeq" id="WP_001217730.1">
    <property type="nucleotide sequence ID" value="NZ_LS483365.1"/>
</dbReference>
<dbReference type="RefSeq" id="YP_499488.1">
    <property type="nucleotide sequence ID" value="NC_007795.1"/>
</dbReference>
<dbReference type="PDB" id="6EMW">
    <property type="method" value="EM"/>
    <property type="resolution" value="11.00 A"/>
    <property type="chains" value="e/f/g/h/i/j=1-90"/>
</dbReference>
<dbReference type="PDBsum" id="6EMW"/>
<dbReference type="SMR" id="Q2G1U5"/>
<dbReference type="STRING" id="93061.SAOUHSC_00935"/>
<dbReference type="PaxDb" id="1280-SAXN108_0994"/>
<dbReference type="GeneID" id="3920764"/>
<dbReference type="KEGG" id="sao:SAOUHSC_00935"/>
<dbReference type="PATRIC" id="fig|93061.5.peg.856"/>
<dbReference type="eggNOG" id="COG4862">
    <property type="taxonomic scope" value="Bacteria"/>
</dbReference>
<dbReference type="HOGENOM" id="CLU_071496_2_1_9"/>
<dbReference type="OrthoDB" id="2360201at2"/>
<dbReference type="PRO" id="PR:Q2G1U5"/>
<dbReference type="Proteomes" id="UP000008816">
    <property type="component" value="Chromosome"/>
</dbReference>
<dbReference type="GO" id="GO:0030674">
    <property type="term" value="F:protein-macromolecule adaptor activity"/>
    <property type="evidence" value="ECO:0007669"/>
    <property type="project" value="UniProtKB-UniRule"/>
</dbReference>
<dbReference type="Gene3D" id="3.30.70.1950">
    <property type="match status" value="1"/>
</dbReference>
<dbReference type="HAMAP" id="MF_01124">
    <property type="entry name" value="MecA"/>
    <property type="match status" value="1"/>
</dbReference>
<dbReference type="InterPro" id="IPR038471">
    <property type="entry name" value="MecA_C_sf"/>
</dbReference>
<dbReference type="InterPro" id="IPR008681">
    <property type="entry name" value="Neg-reg_MecA"/>
</dbReference>
<dbReference type="NCBIfam" id="NF002642">
    <property type="entry name" value="PRK02315.1-3"/>
    <property type="match status" value="1"/>
</dbReference>
<dbReference type="NCBIfam" id="NF002644">
    <property type="entry name" value="PRK02315.1-5"/>
    <property type="match status" value="1"/>
</dbReference>
<dbReference type="PANTHER" id="PTHR39161">
    <property type="entry name" value="ADAPTER PROTEIN MECA"/>
    <property type="match status" value="1"/>
</dbReference>
<dbReference type="PANTHER" id="PTHR39161:SF1">
    <property type="entry name" value="ADAPTER PROTEIN MECA 1"/>
    <property type="match status" value="1"/>
</dbReference>
<dbReference type="Pfam" id="PF05389">
    <property type="entry name" value="MecA"/>
    <property type="match status" value="1"/>
</dbReference>
<dbReference type="PIRSF" id="PIRSF029008">
    <property type="entry name" value="MecA"/>
    <property type="match status" value="1"/>
</dbReference>
<sequence>MRIERVDDTTVKLFITYSDIEARGFSREDLWTNRKRGEEFFWSMMDEINEEEDFVVEGPLWIQVHAFEKGVEVTISKSKNEDMMNMSDDDATDQFDEQVQELLAQTLEGEDQLEELFEQRTKEKEAQGSKRQKSSARKNTRTIIVKFNDLEDVINYAYHSNPITTEFEDLLYMVDGTYYYAVYFDSHVDQEVINDSYSQLLEFAYPTDRTEVYLNDYAKIIMSHNVTAQVRRYFPETTE</sequence>
<keyword id="KW-0002">3D-structure</keyword>
<keyword id="KW-1185">Reference proteome</keyword>
<name>MECA_STAA8</name>
<evidence type="ECO:0000255" key="1">
    <source>
        <dbReference type="HAMAP-Rule" id="MF_01124"/>
    </source>
</evidence>
<evidence type="ECO:0000256" key="2">
    <source>
        <dbReference type="SAM" id="MobiDB-lite"/>
    </source>
</evidence>
<accession>Q2G1U5</accession>
<protein>
    <recommendedName>
        <fullName evidence="1">Adapter protein MecA</fullName>
    </recommendedName>
</protein>
<organism>
    <name type="scientific">Staphylococcus aureus (strain NCTC 8325 / PS 47)</name>
    <dbReference type="NCBI Taxonomy" id="93061"/>
    <lineage>
        <taxon>Bacteria</taxon>
        <taxon>Bacillati</taxon>
        <taxon>Bacillota</taxon>
        <taxon>Bacilli</taxon>
        <taxon>Bacillales</taxon>
        <taxon>Staphylococcaceae</taxon>
        <taxon>Staphylococcus</taxon>
    </lineage>
</organism>
<feature type="chain" id="PRO_1000065347" description="Adapter protein MecA">
    <location>
        <begin position="1"/>
        <end position="239"/>
    </location>
</feature>
<feature type="region of interest" description="Disordered" evidence="2">
    <location>
        <begin position="118"/>
        <end position="137"/>
    </location>
</feature>
<feature type="compositionally biased region" description="Basic and acidic residues" evidence="2">
    <location>
        <begin position="118"/>
        <end position="128"/>
    </location>
</feature>
<proteinExistence type="evidence at protein level"/>
<reference key="1">
    <citation type="book" date="2006" name="Gram positive pathogens, 2nd edition">
        <title>The Staphylococcus aureus NCTC 8325 genome.</title>
        <editorList>
            <person name="Fischetti V."/>
            <person name="Novick R."/>
            <person name="Ferretti J."/>
            <person name="Portnoy D."/>
            <person name="Rood J."/>
        </editorList>
        <authorList>
            <person name="Gillaspy A.F."/>
            <person name="Worrell V."/>
            <person name="Orvis J."/>
            <person name="Roe B.A."/>
            <person name="Dyer D.W."/>
            <person name="Iandolo J.J."/>
        </authorList>
    </citation>
    <scope>NUCLEOTIDE SEQUENCE [LARGE SCALE GENOMIC DNA]</scope>
    <source>
        <strain>NCTC 8325 / PS 47</strain>
    </source>
</reference>